<proteinExistence type="evidence at transcript level"/>
<gene>
    <name type="primary">Gsr</name>
</gene>
<keyword id="KW-0963">Cytoplasm</keyword>
<keyword id="KW-1015">Disulfide bond</keyword>
<keyword id="KW-0274">FAD</keyword>
<keyword id="KW-0285">Flavoprotein</keyword>
<keyword id="KW-0496">Mitochondrion</keyword>
<keyword id="KW-0521">NADP</keyword>
<keyword id="KW-0560">Oxidoreductase</keyword>
<keyword id="KW-0676">Redox-active center</keyword>
<keyword id="KW-1185">Reference proteome</keyword>
<organism>
    <name type="scientific">Rattus norvegicus</name>
    <name type="common">Rat</name>
    <dbReference type="NCBI Taxonomy" id="10116"/>
    <lineage>
        <taxon>Eukaryota</taxon>
        <taxon>Metazoa</taxon>
        <taxon>Chordata</taxon>
        <taxon>Craniata</taxon>
        <taxon>Vertebrata</taxon>
        <taxon>Euteleostomi</taxon>
        <taxon>Mammalia</taxon>
        <taxon>Eutheria</taxon>
        <taxon>Euarchontoglires</taxon>
        <taxon>Glires</taxon>
        <taxon>Rodentia</taxon>
        <taxon>Myomorpha</taxon>
        <taxon>Muroidea</taxon>
        <taxon>Muridae</taxon>
        <taxon>Murinae</taxon>
        <taxon>Rattus</taxon>
    </lineage>
</organism>
<protein>
    <recommendedName>
        <fullName>Glutathione reductase</fullName>
        <shortName>GR</shortName>
        <shortName>GRase</shortName>
        <ecNumber>1.8.1.7</ecNumber>
    </recommendedName>
</protein>
<accession>P70619</accession>
<dbReference type="EC" id="1.8.1.7"/>
<dbReference type="EMBL" id="U73174">
    <property type="protein sequence ID" value="AAB18132.1"/>
    <property type="status" value="ALT_FRAME"/>
    <property type="molecule type" value="mRNA"/>
</dbReference>
<dbReference type="SMR" id="P70619"/>
<dbReference type="FunCoup" id="P70619">
    <property type="interactions" value="1588"/>
</dbReference>
<dbReference type="STRING" id="10116.ENSRNOP00000068989"/>
<dbReference type="BindingDB" id="P70619"/>
<dbReference type="ChEMBL" id="CHEMBL3286088"/>
<dbReference type="GlyGen" id="P70619">
    <property type="glycosylation" value="2 sites"/>
</dbReference>
<dbReference type="iPTMnet" id="P70619"/>
<dbReference type="PhosphoSitePlus" id="P70619"/>
<dbReference type="jPOST" id="P70619"/>
<dbReference type="PaxDb" id="10116-ENSRNOP00000020252"/>
<dbReference type="UCSC" id="RGD:621747">
    <property type="organism name" value="rat"/>
</dbReference>
<dbReference type="AGR" id="RGD:621747"/>
<dbReference type="RGD" id="621747">
    <property type="gene designation" value="Gsr"/>
</dbReference>
<dbReference type="eggNOG" id="KOG0405">
    <property type="taxonomic scope" value="Eukaryota"/>
</dbReference>
<dbReference type="InParanoid" id="P70619"/>
<dbReference type="PhylomeDB" id="P70619"/>
<dbReference type="Reactome" id="R-RNO-3299685">
    <property type="pathway name" value="Detoxification of Reactive Oxygen Species"/>
</dbReference>
<dbReference type="Reactome" id="R-RNO-499943">
    <property type="pathway name" value="Interconversion of nucleotide di- and triphosphates"/>
</dbReference>
<dbReference type="Reactome" id="R-RNO-5628897">
    <property type="pathway name" value="TP53 Regulates Metabolic Genes"/>
</dbReference>
<dbReference type="SABIO-RK" id="P70619"/>
<dbReference type="Proteomes" id="UP000002494">
    <property type="component" value="Unplaced"/>
</dbReference>
<dbReference type="GO" id="GO:0005829">
    <property type="term" value="C:cytosol"/>
    <property type="evidence" value="ECO:0000318"/>
    <property type="project" value="GO_Central"/>
</dbReference>
<dbReference type="GO" id="GO:0009897">
    <property type="term" value="C:external side of plasma membrane"/>
    <property type="evidence" value="ECO:0000266"/>
    <property type="project" value="RGD"/>
</dbReference>
<dbReference type="GO" id="GO:0005739">
    <property type="term" value="C:mitochondrion"/>
    <property type="evidence" value="ECO:0000318"/>
    <property type="project" value="GO_Central"/>
</dbReference>
<dbReference type="GO" id="GO:0050660">
    <property type="term" value="F:flavin adenine dinucleotide binding"/>
    <property type="evidence" value="ECO:0000314"/>
    <property type="project" value="RGD"/>
</dbReference>
<dbReference type="GO" id="GO:0043295">
    <property type="term" value="F:glutathione binding"/>
    <property type="evidence" value="ECO:0000314"/>
    <property type="project" value="RGD"/>
</dbReference>
<dbReference type="GO" id="GO:0004362">
    <property type="term" value="F:glutathione-disulfide reductase (NADPH) activity"/>
    <property type="evidence" value="ECO:0000314"/>
    <property type="project" value="CACAO"/>
</dbReference>
<dbReference type="GO" id="GO:0042802">
    <property type="term" value="F:identical protein binding"/>
    <property type="evidence" value="ECO:0000353"/>
    <property type="project" value="RGD"/>
</dbReference>
<dbReference type="GO" id="GO:0050661">
    <property type="term" value="F:NADP binding"/>
    <property type="evidence" value="ECO:0000314"/>
    <property type="project" value="RGD"/>
</dbReference>
<dbReference type="GO" id="GO:0045454">
    <property type="term" value="P:cell redox homeostasis"/>
    <property type="evidence" value="ECO:0000318"/>
    <property type="project" value="GO_Central"/>
</dbReference>
<dbReference type="GO" id="GO:0034599">
    <property type="term" value="P:cellular response to oxidative stress"/>
    <property type="evidence" value="ECO:0000318"/>
    <property type="project" value="GO_Central"/>
</dbReference>
<dbReference type="GO" id="GO:0006749">
    <property type="term" value="P:glutathione metabolic process"/>
    <property type="evidence" value="ECO:0000314"/>
    <property type="project" value="RGD"/>
</dbReference>
<dbReference type="GO" id="GO:0014823">
    <property type="term" value="P:response to activity"/>
    <property type="evidence" value="ECO:0000270"/>
    <property type="project" value="RGD"/>
</dbReference>
<dbReference type="GO" id="GO:0046686">
    <property type="term" value="P:response to cadmium ion"/>
    <property type="evidence" value="ECO:0000270"/>
    <property type="project" value="RGD"/>
</dbReference>
<dbReference type="GO" id="GO:0045471">
    <property type="term" value="P:response to ethanol"/>
    <property type="evidence" value="ECO:0000270"/>
    <property type="project" value="RGD"/>
</dbReference>
<dbReference type="GO" id="GO:0010041">
    <property type="term" value="P:response to iron(III) ion"/>
    <property type="evidence" value="ECO:0000270"/>
    <property type="project" value="RGD"/>
</dbReference>
<dbReference type="GO" id="GO:0002931">
    <property type="term" value="P:response to ischemia"/>
    <property type="evidence" value="ECO:0000270"/>
    <property type="project" value="RGD"/>
</dbReference>
<dbReference type="GO" id="GO:0035094">
    <property type="term" value="P:response to nicotine"/>
    <property type="evidence" value="ECO:0000270"/>
    <property type="project" value="RGD"/>
</dbReference>
<dbReference type="GO" id="GO:0006979">
    <property type="term" value="P:response to oxidative stress"/>
    <property type="evidence" value="ECO:0000270"/>
    <property type="project" value="RGD"/>
</dbReference>
<dbReference type="GO" id="GO:0033189">
    <property type="term" value="P:response to vitamin A"/>
    <property type="evidence" value="ECO:0000270"/>
    <property type="project" value="RGD"/>
</dbReference>
<dbReference type="GO" id="GO:0007283">
    <property type="term" value="P:spermatogenesis"/>
    <property type="evidence" value="ECO:0000315"/>
    <property type="project" value="RGD"/>
</dbReference>
<dbReference type="FunFam" id="3.30.390.30:FF:000003">
    <property type="entry name" value="Glutathione reductase"/>
    <property type="match status" value="1"/>
</dbReference>
<dbReference type="FunFam" id="3.50.50.60:FF:000118">
    <property type="entry name" value="Glutathione reductase, mitochondrial"/>
    <property type="match status" value="1"/>
</dbReference>
<dbReference type="FunFam" id="3.50.50.60:FF:000671">
    <property type="entry name" value="Thioredoxin reductase 2, tandem duplicate 1"/>
    <property type="match status" value="1"/>
</dbReference>
<dbReference type="Gene3D" id="3.30.390.30">
    <property type="match status" value="1"/>
</dbReference>
<dbReference type="Gene3D" id="3.50.50.60">
    <property type="entry name" value="FAD/NAD(P)-binding domain"/>
    <property type="match status" value="2"/>
</dbReference>
<dbReference type="InterPro" id="IPR036188">
    <property type="entry name" value="FAD/NAD-bd_sf"/>
</dbReference>
<dbReference type="InterPro" id="IPR023753">
    <property type="entry name" value="FAD/NAD-binding_dom"/>
</dbReference>
<dbReference type="InterPro" id="IPR016156">
    <property type="entry name" value="FAD/NAD-linked_Rdtase_dimer_sf"/>
</dbReference>
<dbReference type="InterPro" id="IPR006322">
    <property type="entry name" value="Glutathione_Rdtase_euk/bac"/>
</dbReference>
<dbReference type="InterPro" id="IPR046952">
    <property type="entry name" value="GSHR/TRXR-like"/>
</dbReference>
<dbReference type="InterPro" id="IPR004099">
    <property type="entry name" value="Pyr_nucl-diS_OxRdtase_dimer"/>
</dbReference>
<dbReference type="NCBIfam" id="TIGR01421">
    <property type="entry name" value="gluta_reduc_1"/>
    <property type="match status" value="1"/>
</dbReference>
<dbReference type="NCBIfam" id="NF004776">
    <property type="entry name" value="PRK06116.1"/>
    <property type="match status" value="1"/>
</dbReference>
<dbReference type="PANTHER" id="PTHR42737">
    <property type="entry name" value="GLUTATHIONE REDUCTASE"/>
    <property type="match status" value="1"/>
</dbReference>
<dbReference type="PANTHER" id="PTHR42737:SF5">
    <property type="entry name" value="GLUTATHIONE REDUCTASE, MITOCHONDRIAL"/>
    <property type="match status" value="1"/>
</dbReference>
<dbReference type="Pfam" id="PF07992">
    <property type="entry name" value="Pyr_redox_2"/>
    <property type="match status" value="1"/>
</dbReference>
<dbReference type="Pfam" id="PF02852">
    <property type="entry name" value="Pyr_redox_dim"/>
    <property type="match status" value="1"/>
</dbReference>
<dbReference type="PRINTS" id="PR00368">
    <property type="entry name" value="FADPNR"/>
</dbReference>
<dbReference type="PRINTS" id="PR00411">
    <property type="entry name" value="PNDRDTASEI"/>
</dbReference>
<dbReference type="SUPFAM" id="SSF51905">
    <property type="entry name" value="FAD/NAD(P)-binding domain"/>
    <property type="match status" value="2"/>
</dbReference>
<dbReference type="SUPFAM" id="SSF55424">
    <property type="entry name" value="FAD/NAD-linked reductases, dimerisation (C-terminal) domain"/>
    <property type="match status" value="1"/>
</dbReference>
<name>GSHR_RAT</name>
<reference key="1">
    <citation type="submission" date="1996-10" db="EMBL/GenBank/DDBJ databases">
        <authorList>
            <person name="Hou W.M."/>
            <person name="Cheplinsky A.B."/>
        </authorList>
    </citation>
    <scope>NUCLEOTIDE SEQUENCE [MRNA]</scope>
</reference>
<comment type="function">
    <text evidence="1">Catalyzes the reduction of glutathione disulfide (GSSG) to reduced glutathione (GSH). Constitutes the major mechanism to maintain a high GSH:GSSG ratio in the cytosol.</text>
</comment>
<comment type="catalytic activity">
    <reaction evidence="1">
        <text>2 glutathione + NADP(+) = glutathione disulfide + NADPH + H(+)</text>
        <dbReference type="Rhea" id="RHEA:11740"/>
        <dbReference type="ChEBI" id="CHEBI:15378"/>
        <dbReference type="ChEBI" id="CHEBI:57783"/>
        <dbReference type="ChEBI" id="CHEBI:57925"/>
        <dbReference type="ChEBI" id="CHEBI:58297"/>
        <dbReference type="ChEBI" id="CHEBI:58349"/>
        <dbReference type="EC" id="1.8.1.7"/>
    </reaction>
</comment>
<comment type="cofactor">
    <cofactor evidence="1">
        <name>FAD</name>
        <dbReference type="ChEBI" id="CHEBI:57692"/>
    </cofactor>
    <text evidence="1">Binds 1 FAD per subunit.</text>
</comment>
<comment type="subunit">
    <text evidence="1">Homodimer; disulfide-linked.</text>
</comment>
<comment type="subcellular location">
    <subcellularLocation>
        <location evidence="1">Mitochondrion</location>
    </subcellularLocation>
    <subcellularLocation>
        <location evidence="1">Cytoplasm</location>
    </subcellularLocation>
</comment>
<comment type="miscellaneous">
    <text evidence="1">The active site is a redox-active disulfide bond.</text>
</comment>
<comment type="similarity">
    <text evidence="2">Belongs to the class-I pyridine nucleotide-disulfide oxidoreductase family.</text>
</comment>
<comment type="sequence caution" evidence="2">
    <conflict type="frameshift">
        <sequence resource="EMBL-CDS" id="AAB18132"/>
    </conflict>
</comment>
<evidence type="ECO:0000250" key="1">
    <source>
        <dbReference type="UniProtKB" id="P00390"/>
    </source>
</evidence>
<evidence type="ECO:0000305" key="2"/>
<feature type="chain" id="PRO_0000067957" description="Glutathione reductase">
    <location>
        <begin position="1" status="less than"/>
        <end position="424"/>
    </location>
</feature>
<feature type="active site" description="Proton acceptor" evidence="1">
    <location>
        <position position="413"/>
    </location>
</feature>
<feature type="binding site" evidence="1">
    <location>
        <position position="8"/>
    </location>
    <ligand>
        <name>FAD</name>
        <dbReference type="ChEBI" id="CHEBI:57692"/>
    </ligand>
</feature>
<feature type="binding site" evidence="1">
    <location>
        <position position="56"/>
    </location>
    <ligand>
        <name>glutathione</name>
        <dbReference type="ChEBI" id="CHEBI:57925"/>
    </ligand>
</feature>
<feature type="binding site" evidence="1">
    <location>
        <position position="72"/>
    </location>
    <ligand>
        <name>FAD</name>
        <dbReference type="ChEBI" id="CHEBI:57692"/>
    </ligand>
</feature>
<feature type="binding site" evidence="1">
    <location>
        <position position="137"/>
    </location>
    <ligand>
        <name>NADP(+)</name>
        <dbReference type="ChEBI" id="CHEBI:58349"/>
    </ligand>
</feature>
<feature type="binding site" evidence="1">
    <location>
        <position position="140"/>
    </location>
    <ligand>
        <name>NADP(+)</name>
        <dbReference type="ChEBI" id="CHEBI:58349"/>
    </ligand>
</feature>
<feature type="binding site" evidence="1">
    <location>
        <position position="143"/>
    </location>
    <ligand>
        <name>NADP(+)</name>
        <dbReference type="ChEBI" id="CHEBI:58349"/>
    </ligand>
</feature>
<feature type="binding site" evidence="1">
    <location>
        <position position="160"/>
    </location>
    <ligand>
        <name>NADP(+)</name>
        <dbReference type="ChEBI" id="CHEBI:58349"/>
    </ligand>
</feature>
<feature type="binding site" evidence="1">
    <location>
        <position position="166"/>
    </location>
    <ligand>
        <name>NADP(+)</name>
        <dbReference type="ChEBI" id="CHEBI:58349"/>
    </ligand>
</feature>
<feature type="binding site" evidence="1">
    <location>
        <position position="236"/>
    </location>
    <ligand>
        <name>NADP(+)</name>
        <dbReference type="ChEBI" id="CHEBI:58349"/>
    </ligand>
</feature>
<feature type="binding site" evidence="1">
    <location>
        <position position="277"/>
    </location>
    <ligand>
        <name>FAD</name>
        <dbReference type="ChEBI" id="CHEBI:57692"/>
    </ligand>
</feature>
<feature type="binding site" evidence="1">
    <location>
        <position position="283"/>
    </location>
    <ligand>
        <name>NADP(+)</name>
        <dbReference type="ChEBI" id="CHEBI:58349"/>
    </ligand>
</feature>
<feature type="binding site" evidence="1">
    <location>
        <position position="285"/>
    </location>
    <ligand>
        <name>FAD</name>
        <dbReference type="ChEBI" id="CHEBI:57692"/>
    </ligand>
</feature>
<feature type="binding site" evidence="1">
    <location>
        <position position="293"/>
    </location>
    <ligand>
        <name>glutathione</name>
        <dbReference type="ChEBI" id="CHEBI:57925"/>
    </ligand>
</feature>
<feature type="binding site" evidence="1">
    <location>
        <position position="316"/>
    </location>
    <ligand>
        <name>NADP(+)</name>
        <dbReference type="ChEBI" id="CHEBI:58349"/>
    </ligand>
</feature>
<feature type="binding site" evidence="1">
    <location>
        <position position="413"/>
    </location>
    <ligand>
        <name>FAD</name>
        <dbReference type="ChEBI" id="CHEBI:57692"/>
    </ligand>
</feature>
<feature type="disulfide bond" description="Interchain" evidence="1">
    <location>
        <position position="32"/>
    </location>
</feature>
<feature type="non-terminal residue">
    <location>
        <position position="1"/>
    </location>
</feature>
<sequence length="424" mass="46301">VNVGCVPKKVMWNTAVHSEFIHDHVDYGFQNCKSKFNWHVIKEKRDAYVSRLNNIYQNNLTKSHIEVIHGYATFRDGPQPTAEVNGKKFTAPHILIATGGVPTVPHENQIPGASLGITSDGFFQLEDLPSRSVIVGAGYIAVEIAGILSALGSKTSLMIRHDKVLRSFDSLISSNCTEELENAGGVEVLTVKKFSQVKEVKKTSSGLELHVVTALPGRKPTVTTIPDVDCLLWAIGRDPNSKGLNLNKLGIQTDDKGHILVDEFQNTNVKGVYAVGDVCGKALLTPVAIAAGRKLAHRLFEGKEDSRLDYDNIPTVVFSHPPIGTVGLTEDEAVHKYGKDNVKIYSTAFTPMYHAVTTRKTKCVMKMVCANKEEKVVGIHMQGIGCDEMLQGFAVAVKMGATKADFDNRVAIHPTSSEELVTLR</sequence>